<evidence type="ECO:0000250" key="1"/>
<evidence type="ECO:0000255" key="2">
    <source>
        <dbReference type="PROSITE-ProRule" id="PRU00539"/>
    </source>
</evidence>
<evidence type="ECO:0000305" key="3"/>
<name>RDRP_ROTS1</name>
<proteinExistence type="inferred from homology"/>
<dbReference type="EC" id="2.7.7.48"/>
<dbReference type="EMBL" id="X16830">
    <property type="protein sequence ID" value="CAA34732.1"/>
    <property type="molecule type" value="Genomic_RNA"/>
</dbReference>
<dbReference type="PIR" id="A35321">
    <property type="entry name" value="P1XRSR"/>
</dbReference>
<dbReference type="SMR" id="P22678"/>
<dbReference type="Proteomes" id="UP000007180">
    <property type="component" value="Genome"/>
</dbReference>
<dbReference type="GO" id="GO:0044423">
    <property type="term" value="C:virion component"/>
    <property type="evidence" value="ECO:0007669"/>
    <property type="project" value="UniProtKB-KW"/>
</dbReference>
<dbReference type="GO" id="GO:0000166">
    <property type="term" value="F:nucleotide binding"/>
    <property type="evidence" value="ECO:0007669"/>
    <property type="project" value="UniProtKB-KW"/>
</dbReference>
<dbReference type="GO" id="GO:0003723">
    <property type="term" value="F:RNA binding"/>
    <property type="evidence" value="ECO:0007669"/>
    <property type="project" value="UniProtKB-KW"/>
</dbReference>
<dbReference type="GO" id="GO:0003968">
    <property type="term" value="F:RNA-directed RNA polymerase activity"/>
    <property type="evidence" value="ECO:0007669"/>
    <property type="project" value="UniProtKB-KW"/>
</dbReference>
<dbReference type="GO" id="GO:0006351">
    <property type="term" value="P:DNA-templated transcription"/>
    <property type="evidence" value="ECO:0007669"/>
    <property type="project" value="InterPro"/>
</dbReference>
<dbReference type="GO" id="GO:0019079">
    <property type="term" value="P:viral genome replication"/>
    <property type="evidence" value="ECO:0007669"/>
    <property type="project" value="InterPro"/>
</dbReference>
<dbReference type="Gene3D" id="1.10.357.80">
    <property type="match status" value="2"/>
</dbReference>
<dbReference type="Gene3D" id="1.20.120.1390">
    <property type="match status" value="1"/>
</dbReference>
<dbReference type="Gene3D" id="3.30.230.140">
    <property type="match status" value="2"/>
</dbReference>
<dbReference type="Gene3D" id="3.30.70.2480">
    <property type="match status" value="1"/>
</dbReference>
<dbReference type="Gene3D" id="1.10.10.1990">
    <property type="entry name" value="Viral RNA-directed RNA polymerase, 4-helical domain"/>
    <property type="match status" value="1"/>
</dbReference>
<dbReference type="InterPro" id="IPR043502">
    <property type="entry name" value="DNA/RNA_pol_sf"/>
</dbReference>
<dbReference type="InterPro" id="IPR042032">
    <property type="entry name" value="RNA-dir_pol_4-hel_dom"/>
</dbReference>
<dbReference type="InterPro" id="IPR001795">
    <property type="entry name" value="RNA-dir_pol_luteovirus"/>
</dbReference>
<dbReference type="InterPro" id="IPR007097">
    <property type="entry name" value="RNA-dir_pol_reovirus"/>
</dbReference>
<dbReference type="InterPro" id="IPR022071">
    <property type="entry name" value="Rotavirus_VP1_C"/>
</dbReference>
<dbReference type="Pfam" id="PF02123">
    <property type="entry name" value="RdRP_4"/>
    <property type="match status" value="1"/>
</dbReference>
<dbReference type="Pfam" id="PF12289">
    <property type="entry name" value="Rotavirus_VP1"/>
    <property type="match status" value="1"/>
</dbReference>
<dbReference type="SUPFAM" id="SSF56672">
    <property type="entry name" value="DNA/RNA polymerases"/>
    <property type="match status" value="1"/>
</dbReference>
<dbReference type="PROSITE" id="PS50523">
    <property type="entry name" value="RDRP_DSRNA_REO"/>
    <property type="match status" value="1"/>
</dbReference>
<comment type="function">
    <text evidence="2">RNA-directed RNA polymerase that is involved in both transcription and genome replication. Together with VP3 capping enzyme, forms an enzyme complex positioned near the channels situated at each of the five-fold vertices of the core. Following infection, the outermost layer of the virus is lost, leaving a double-layered particle (DLP) made up of the core and VP6 shell. VP1 then catalyzes the transcription of fully conservative plus-strand genomic RNAs that are extruded through the DLP's channels into the cytoplasm where they function as mRNAs for translation of viral proteins. One copy of each of the viral (+)RNAs is also recruited during core assembly, together with newly synthesized polymerase complexes and VP2. The polymerase of these novo-formed particles catalyzes the synthesis of complementary minus-strands leading to dsRNA formation. To do so, the polymerase specifically recognizes and binds 4 bases 5'-UGUG-3' in the conserved 3'-sequence of plus-strand RNA templates. VP2 presumably activates the autoinhibited VP1-RNA complex to coordinate packaging and genome replication. Once dsRNA synthesis is complete, the polymerase switches to the transcriptional mode, thus providing secondary transcription (By similarity).</text>
</comment>
<comment type="catalytic activity">
    <reaction evidence="2">
        <text>RNA(n) + a ribonucleoside 5'-triphosphate = RNA(n+1) + diphosphate</text>
        <dbReference type="Rhea" id="RHEA:21248"/>
        <dbReference type="Rhea" id="RHEA-COMP:14527"/>
        <dbReference type="Rhea" id="RHEA-COMP:17342"/>
        <dbReference type="ChEBI" id="CHEBI:33019"/>
        <dbReference type="ChEBI" id="CHEBI:61557"/>
        <dbReference type="ChEBI" id="CHEBI:140395"/>
        <dbReference type="EC" id="2.7.7.48"/>
    </reaction>
</comment>
<comment type="cofactor">
    <cofactor evidence="3">
        <name>Mg(2+)</name>
        <dbReference type="ChEBI" id="CHEBI:18420"/>
    </cofactor>
</comment>
<comment type="subunit">
    <text evidence="1 3">Interacts with VP3 (Potential). Interacts with VP2; this interaction activates VP1. Interacts with NSP5; this interaction is probably necessary for the formation of functional virus factories. Interacts with NSP2; this interaction is weak (By similarity).</text>
</comment>
<comment type="subcellular location">
    <subcellularLocation>
        <location evidence="3">Virion</location>
    </subcellularLocation>
    <text evidence="1">Attached inside the inner capsid as a minor component. Also found in spherical cytoplasmic structures, called virus factories, that appear early after infection and are the site of viral replication and packaging (By similarity).</text>
</comment>
<comment type="similarity">
    <text evidence="3">Belongs to the reoviridae RNA-directed RNA polymerase family.</text>
</comment>
<accession>P22678</accession>
<sequence>MGKYNLILSEYLSFIYNSQSAVQIPIYYSSNSELENRCIEFHSKCLENSKNGLSLRKLFVEYNDVIENATLLSILSYSYDKYNAVERKLVKYAKGKPLEADLTVNELDYENNKITSELFPTAEEYTDSLMDPAILTSLSSNLNAVMFWLEKHENDVAEKLKVYKRRLDLFTIVASTINKYGVPRHNAKYRYEYDVMKDKPYYLVTWANSSIEMLMSVFSHDDYLIAKELIVLSYSNRSTLAKLVSSPMSILVALVDINGTFITNEELELEFSNKYLRAIVPDQTFDELNQMLDNMRKAGLVDIPKMIQDWLVDRSIEKFPLMAKIYSWSFHVGFRKQKMLDACAGTLKTEYTENVDDEMYREYTMLIRDEVVKMLEEPVKHDDHLLRDSELAGLLSMSSASNGESRQLKFGRKTIFSTKKNMHVMDDMANERYTPGIIPPVNVDKPIPLGRRDVPGRRTRIIFILPYEYFIAQHAVVEKMLIYAKHTREYAEFYSQSNQLLSYGDVTRFLSNNTMVLYTDVSQWDSSQHNTQPFRKGIIMGLDILANMTNDAKVLQTLNLYKQTQINLMDSYVQIPDGNVIKKIQYGAVASGEKQTKAANSIANLALIKTVLSRISNKHSFATKIIRVDGDDNYAVLQFNTEVTKQMIQDVSNDVRETYARMNAKVKALVSTVGIEIAKRYIAGGKIFFRAGINLLNNEKRGQSTQWDQAAILYSNYIVNRLRGFETDREFILTKIMQMTSVAITGSLRLFPSERVLTTNSTFKVFDSEDFIIEYGTTDDEVYIQRAFMSLSSQKSGIADEIAASSTFKNYVTRLSEQLLFSKNNIVSRGIALTEKAKLNSYAPISLEKRRAQISALLTMLQKPVTFKSSKITINDILRDIKPFFTVSDAHLPIQYQKFMPTLPDNVQYIIQCIGSRTYQIEDDGSKSAISRLISKYSVYKPSIEELYKVISLHENEIQLYLISLGIPKIDADTYVGSKIYSQDKYRILESYVYNLLSINYGCYQLFDFNSPDLEKLIRIPFKGKIPAVTFILHLYAKLEVINYAIKNGSWISLFCNYPKSEMIKLWKKMWNITSLRSPYTNANFFQD</sequence>
<organism>
    <name type="scientific">Rotavirus A (strain RVA/SA11-Both/G3P5B[2])</name>
    <name type="common">RV-A</name>
    <name type="synonym">Simian Agent 11 (strain Both)</name>
    <dbReference type="NCBI Taxonomy" id="37137"/>
    <lineage>
        <taxon>Viruses</taxon>
        <taxon>Riboviria</taxon>
        <taxon>Orthornavirae</taxon>
        <taxon>Duplornaviricota</taxon>
        <taxon>Resentoviricetes</taxon>
        <taxon>Reovirales</taxon>
        <taxon>Sedoreoviridae</taxon>
        <taxon>Rotavirus</taxon>
        <taxon>Rotavirus A</taxon>
    </lineage>
</organism>
<protein>
    <recommendedName>
        <fullName>RNA-directed RNA polymerase</fullName>
        <ecNumber>2.7.7.48</ecNumber>
    </recommendedName>
    <alternativeName>
        <fullName>Protein VP1</fullName>
    </alternativeName>
</protein>
<keyword id="KW-0460">Magnesium</keyword>
<keyword id="KW-0547">Nucleotide-binding</keyword>
<keyword id="KW-0548">Nucleotidyltransferase</keyword>
<keyword id="KW-1185">Reference proteome</keyword>
<keyword id="KW-0694">RNA-binding</keyword>
<keyword id="KW-0696">RNA-directed RNA polymerase</keyword>
<keyword id="KW-0808">Transferase</keyword>
<keyword id="KW-0693">Viral RNA replication</keyword>
<keyword id="KW-0946">Virion</keyword>
<organismHost>
    <name type="scientific">Macaca mulatta</name>
    <name type="common">Rhesus macaque</name>
    <dbReference type="NCBI Taxonomy" id="9544"/>
</organismHost>
<reference key="1">
    <citation type="journal article" date="1990" name="Virology">
        <title>Completion of the genomic sequence of the simian rotavirus SA11: nucleotide sequences of segments 1, 2, and 3.</title>
        <authorList>
            <person name="Mitchell D.B."/>
            <person name="Both G.W."/>
        </authorList>
    </citation>
    <scope>NUCLEOTIDE SEQUENCE [GENOMIC RNA]</scope>
</reference>
<feature type="chain" id="PRO_0000149529" description="RNA-directed RNA polymerase">
    <location>
        <begin position="1"/>
        <end position="1088"/>
    </location>
</feature>
<feature type="domain" description="RdRp catalytic" evidence="2">
    <location>
        <begin position="501"/>
        <end position="687"/>
    </location>
</feature>